<sequence>MAVVVYAPASIGNVSVGFDVLGAAVSPIDGTLLGDRVMVKAGNEPFSLKTAGSFVAKLPSDPKENIVYDCWRVFARELDKKGLELKPLEMTLEKNMPIGSGLGSSACSIVAALDALNQFHANPLDEMELLALMGEMEGQISGGVHYDNVAPCYLGGLQLMLEELGIISQEVPCFDDWYWVMAYPGIKVSTAEARAILPSQYRRQDVIAHGRHLAGFIHACHSGQPELAAKMIKDVIAEPYREKLLPGFADARKYAASAGALATGISGSGPTLFSICKDQDVAQRVARWLEQNYVQNEEGFVHICRLDKKGSIVTGSEL</sequence>
<keyword id="KW-0028">Amino-acid biosynthesis</keyword>
<keyword id="KW-0067">ATP-binding</keyword>
<keyword id="KW-0963">Cytoplasm</keyword>
<keyword id="KW-0418">Kinase</keyword>
<keyword id="KW-0547">Nucleotide-binding</keyword>
<keyword id="KW-0791">Threonine biosynthesis</keyword>
<keyword id="KW-0808">Transferase</keyword>
<dbReference type="EC" id="2.7.1.39" evidence="1"/>
<dbReference type="EMBL" id="BA000037">
    <property type="protein sequence ID" value="BAC93415.1"/>
    <property type="status" value="ALT_INIT"/>
    <property type="molecule type" value="Genomic_DNA"/>
</dbReference>
<dbReference type="RefSeq" id="WP_011078631.1">
    <property type="nucleotide sequence ID" value="NC_005139.1"/>
</dbReference>
<dbReference type="SMR" id="Q7MNR4"/>
<dbReference type="STRING" id="672.VV93_v1c05900"/>
<dbReference type="GeneID" id="93894856"/>
<dbReference type="KEGG" id="vvy:VV0651"/>
<dbReference type="eggNOG" id="COG0083">
    <property type="taxonomic scope" value="Bacteria"/>
</dbReference>
<dbReference type="HOGENOM" id="CLU_041243_1_1_6"/>
<dbReference type="UniPathway" id="UPA00050">
    <property type="reaction ID" value="UER00064"/>
</dbReference>
<dbReference type="Proteomes" id="UP000002675">
    <property type="component" value="Chromosome I"/>
</dbReference>
<dbReference type="GO" id="GO:0005737">
    <property type="term" value="C:cytoplasm"/>
    <property type="evidence" value="ECO:0007669"/>
    <property type="project" value="UniProtKB-SubCell"/>
</dbReference>
<dbReference type="GO" id="GO:0005524">
    <property type="term" value="F:ATP binding"/>
    <property type="evidence" value="ECO:0007669"/>
    <property type="project" value="UniProtKB-UniRule"/>
</dbReference>
<dbReference type="GO" id="GO:0004413">
    <property type="term" value="F:homoserine kinase activity"/>
    <property type="evidence" value="ECO:0007669"/>
    <property type="project" value="UniProtKB-UniRule"/>
</dbReference>
<dbReference type="GO" id="GO:0009088">
    <property type="term" value="P:threonine biosynthetic process"/>
    <property type="evidence" value="ECO:0007669"/>
    <property type="project" value="UniProtKB-UniRule"/>
</dbReference>
<dbReference type="FunFam" id="3.30.70.890:FF:000002">
    <property type="entry name" value="Homoserine kinase"/>
    <property type="match status" value="1"/>
</dbReference>
<dbReference type="Gene3D" id="3.30.230.10">
    <property type="match status" value="1"/>
</dbReference>
<dbReference type="Gene3D" id="3.30.70.890">
    <property type="entry name" value="GHMP kinase, C-terminal domain"/>
    <property type="match status" value="1"/>
</dbReference>
<dbReference type="HAMAP" id="MF_00384">
    <property type="entry name" value="Homoser_kinase"/>
    <property type="match status" value="1"/>
</dbReference>
<dbReference type="InterPro" id="IPR013750">
    <property type="entry name" value="GHMP_kinase_C_dom"/>
</dbReference>
<dbReference type="InterPro" id="IPR036554">
    <property type="entry name" value="GHMP_kinase_C_sf"/>
</dbReference>
<dbReference type="InterPro" id="IPR006204">
    <property type="entry name" value="GHMP_kinase_N_dom"/>
</dbReference>
<dbReference type="InterPro" id="IPR006203">
    <property type="entry name" value="GHMP_knse_ATP-bd_CS"/>
</dbReference>
<dbReference type="InterPro" id="IPR000870">
    <property type="entry name" value="Homoserine_kinase"/>
</dbReference>
<dbReference type="InterPro" id="IPR020568">
    <property type="entry name" value="Ribosomal_Su5_D2-typ_SF"/>
</dbReference>
<dbReference type="InterPro" id="IPR014721">
    <property type="entry name" value="Ribsml_uS5_D2-typ_fold_subgr"/>
</dbReference>
<dbReference type="NCBIfam" id="NF002288">
    <property type="entry name" value="PRK01212.1-4"/>
    <property type="match status" value="1"/>
</dbReference>
<dbReference type="NCBIfam" id="TIGR00191">
    <property type="entry name" value="thrB"/>
    <property type="match status" value="1"/>
</dbReference>
<dbReference type="PANTHER" id="PTHR20861:SF1">
    <property type="entry name" value="HOMOSERINE KINASE"/>
    <property type="match status" value="1"/>
</dbReference>
<dbReference type="PANTHER" id="PTHR20861">
    <property type="entry name" value="HOMOSERINE/4-DIPHOSPHOCYTIDYL-2-C-METHYL-D-ERYTHRITOL KINASE"/>
    <property type="match status" value="1"/>
</dbReference>
<dbReference type="Pfam" id="PF08544">
    <property type="entry name" value="GHMP_kinases_C"/>
    <property type="match status" value="1"/>
</dbReference>
<dbReference type="Pfam" id="PF00288">
    <property type="entry name" value="GHMP_kinases_N"/>
    <property type="match status" value="1"/>
</dbReference>
<dbReference type="PIRSF" id="PIRSF000676">
    <property type="entry name" value="Homoser_kin"/>
    <property type="match status" value="1"/>
</dbReference>
<dbReference type="PRINTS" id="PR00958">
    <property type="entry name" value="HOMSERKINASE"/>
</dbReference>
<dbReference type="SUPFAM" id="SSF55060">
    <property type="entry name" value="GHMP Kinase, C-terminal domain"/>
    <property type="match status" value="1"/>
</dbReference>
<dbReference type="SUPFAM" id="SSF54211">
    <property type="entry name" value="Ribosomal protein S5 domain 2-like"/>
    <property type="match status" value="1"/>
</dbReference>
<dbReference type="PROSITE" id="PS00627">
    <property type="entry name" value="GHMP_KINASES_ATP"/>
    <property type="match status" value="1"/>
</dbReference>
<evidence type="ECO:0000255" key="1">
    <source>
        <dbReference type="HAMAP-Rule" id="MF_00384"/>
    </source>
</evidence>
<evidence type="ECO:0000305" key="2"/>
<name>KHSE_VIBVY</name>
<organism>
    <name type="scientific">Vibrio vulnificus (strain YJ016)</name>
    <dbReference type="NCBI Taxonomy" id="196600"/>
    <lineage>
        <taxon>Bacteria</taxon>
        <taxon>Pseudomonadati</taxon>
        <taxon>Pseudomonadota</taxon>
        <taxon>Gammaproteobacteria</taxon>
        <taxon>Vibrionales</taxon>
        <taxon>Vibrionaceae</taxon>
        <taxon>Vibrio</taxon>
    </lineage>
</organism>
<feature type="chain" id="PRO_0000156631" description="Homoserine kinase">
    <location>
        <begin position="1"/>
        <end position="318"/>
    </location>
</feature>
<feature type="binding site" evidence="1">
    <location>
        <begin position="97"/>
        <end position="107"/>
    </location>
    <ligand>
        <name>ATP</name>
        <dbReference type="ChEBI" id="CHEBI:30616"/>
    </ligand>
</feature>
<proteinExistence type="inferred from homology"/>
<accession>Q7MNR4</accession>
<reference key="1">
    <citation type="journal article" date="2003" name="Genome Res.">
        <title>Comparative genome analysis of Vibrio vulnificus, a marine pathogen.</title>
        <authorList>
            <person name="Chen C.-Y."/>
            <person name="Wu K.-M."/>
            <person name="Chang Y.-C."/>
            <person name="Chang C.-H."/>
            <person name="Tsai H.-C."/>
            <person name="Liao T.-L."/>
            <person name="Liu Y.-M."/>
            <person name="Chen H.-J."/>
            <person name="Shen A.B.-T."/>
            <person name="Li J.-C."/>
            <person name="Su T.-L."/>
            <person name="Shao C.-P."/>
            <person name="Lee C.-T."/>
            <person name="Hor L.-I."/>
            <person name="Tsai S.-F."/>
        </authorList>
    </citation>
    <scope>NUCLEOTIDE SEQUENCE [LARGE SCALE GENOMIC DNA]</scope>
    <source>
        <strain>YJ016</strain>
    </source>
</reference>
<protein>
    <recommendedName>
        <fullName evidence="1">Homoserine kinase</fullName>
        <shortName evidence="1">HK</shortName>
        <shortName evidence="1">HSK</shortName>
        <ecNumber evidence="1">2.7.1.39</ecNumber>
    </recommendedName>
</protein>
<gene>
    <name evidence="1" type="primary">thrB</name>
    <name type="ordered locus">VV0651</name>
</gene>
<comment type="function">
    <text evidence="1">Catalyzes the ATP-dependent phosphorylation of L-homoserine to L-homoserine phosphate.</text>
</comment>
<comment type="catalytic activity">
    <reaction evidence="1">
        <text>L-homoserine + ATP = O-phospho-L-homoserine + ADP + H(+)</text>
        <dbReference type="Rhea" id="RHEA:13985"/>
        <dbReference type="ChEBI" id="CHEBI:15378"/>
        <dbReference type="ChEBI" id="CHEBI:30616"/>
        <dbReference type="ChEBI" id="CHEBI:57476"/>
        <dbReference type="ChEBI" id="CHEBI:57590"/>
        <dbReference type="ChEBI" id="CHEBI:456216"/>
        <dbReference type="EC" id="2.7.1.39"/>
    </reaction>
</comment>
<comment type="pathway">
    <text evidence="1">Amino-acid biosynthesis; L-threonine biosynthesis; L-threonine from L-aspartate: step 4/5.</text>
</comment>
<comment type="subcellular location">
    <subcellularLocation>
        <location evidence="1">Cytoplasm</location>
    </subcellularLocation>
</comment>
<comment type="similarity">
    <text evidence="1">Belongs to the GHMP kinase family. Homoserine kinase subfamily.</text>
</comment>
<comment type="sequence caution" evidence="2">
    <conflict type="erroneous initiation">
        <sequence resource="EMBL-CDS" id="BAC93415"/>
    </conflict>
</comment>